<protein>
    <recommendedName>
        <fullName>Transposase</fullName>
    </recommendedName>
</protein>
<gene>
    <name type="primary">nmoT</name>
</gene>
<sequence length="508" mass="58552">MALLSVIRRWHFREHLSIREICRRTGLSRNTIRKYLRAGGAEPKFNVPERPSKLDPFADRLSAWLKTESKKSRKQKRTMKQLHSDLVSLGYEGSYNRVAAFAREWRDDRQRELQTTGRGTFVPLAFEPGEAFQFDWSEDWAIIGNERTKLQVAHTKLSYSRAFIVRAYLLQTHEMLFDAHNHAFRVFGGIPGRGIYDNMRTAIDKVGRGKERDVNVRFMAMASHYVFEPEFCNPASGWEKGQVEKNVQDARHRFFQPVPRFPSLEALNDWLEQRCKEFWAKTPHGQMRGTIADIWVEEVPALMPASRPFDGFVEYTKRVTPTCLVHLERNRYSVPASLANRPVSLRVYPDRVVVAAEGQIVCEHRRVIDRSHDRPGQTIYDWRHYLAVVQRKPGALRNGAPFVELPDVFRTLQQYLLKKPGGDREMVDILALVLQHDEQAVLSAVDMALRSGVPTKTHVLNLLHRLVDGKSLTPPTLDAPQALTLTNEPKANVERYDTLRKTEVRHAS</sequence>
<reference key="1">
    <citation type="journal article" date="1997" name="J. Bacteriol.">
        <title>Cloning, sequencing, and analysis of a gene cluster from Chelatobacter heintzii ATCC 29600 encoding nitrilotriacetate monooxygenase and NADH:flavin mononucleotide oxidoreductase.</title>
        <authorList>
            <person name="Xu Y."/>
            <person name="Mortimer M.W."/>
            <person name="Fisher T.S."/>
            <person name="Kahn M.L."/>
            <person name="Brockman F.J."/>
            <person name="Xun L."/>
        </authorList>
    </citation>
    <scope>NUCLEOTIDE SEQUENCE [GENOMIC DNA]</scope>
    <source>
        <strain>ATCC 29600 / DSM 10368 / NCIMB 13986</strain>
    </source>
</reference>
<accession>Q46087</accession>
<name>TRAT_AMIAI</name>
<dbReference type="EMBL" id="L49438">
    <property type="protein sequence ID" value="AAB47924.1"/>
    <property type="molecule type" value="Genomic_DNA"/>
</dbReference>
<dbReference type="RefSeq" id="WP_157097261.1">
    <property type="nucleotide sequence ID" value="NZ_CP015007.1"/>
</dbReference>
<dbReference type="SMR" id="Q46087"/>
<dbReference type="OrthoDB" id="2065409at2"/>
<dbReference type="GO" id="GO:0003677">
    <property type="term" value="F:DNA binding"/>
    <property type="evidence" value="ECO:0007669"/>
    <property type="project" value="UniProtKB-KW"/>
</dbReference>
<dbReference type="GO" id="GO:0015074">
    <property type="term" value="P:DNA integration"/>
    <property type="evidence" value="ECO:0007669"/>
    <property type="project" value="InterPro"/>
</dbReference>
<dbReference type="GO" id="GO:0006310">
    <property type="term" value="P:DNA recombination"/>
    <property type="evidence" value="ECO:0007669"/>
    <property type="project" value="UniProtKB-KW"/>
</dbReference>
<dbReference type="GO" id="GO:0032196">
    <property type="term" value="P:transposition"/>
    <property type="evidence" value="ECO:0007669"/>
    <property type="project" value="UniProtKB-KW"/>
</dbReference>
<dbReference type="InterPro" id="IPR017894">
    <property type="entry name" value="HTH_IS21_transposase_type"/>
</dbReference>
<dbReference type="InterPro" id="IPR001584">
    <property type="entry name" value="Integrase_cat-core"/>
</dbReference>
<dbReference type="InterPro" id="IPR054353">
    <property type="entry name" value="IstA-like_C"/>
</dbReference>
<dbReference type="NCBIfam" id="NF033546">
    <property type="entry name" value="transpos_IS21"/>
    <property type="match status" value="1"/>
</dbReference>
<dbReference type="PANTHER" id="PTHR35004:SF7">
    <property type="entry name" value="INTEGRASE PROTEIN"/>
    <property type="match status" value="1"/>
</dbReference>
<dbReference type="PANTHER" id="PTHR35004">
    <property type="entry name" value="TRANSPOSASE RV3428C-RELATED"/>
    <property type="match status" value="1"/>
</dbReference>
<dbReference type="Pfam" id="PF22483">
    <property type="entry name" value="Mu-transpos_C_2"/>
    <property type="match status" value="1"/>
</dbReference>
<dbReference type="PROSITE" id="PS50531">
    <property type="entry name" value="HTH_IS21"/>
    <property type="match status" value="1"/>
</dbReference>
<dbReference type="PROSITE" id="PS50994">
    <property type="entry name" value="INTEGRASE"/>
    <property type="match status" value="1"/>
</dbReference>
<evidence type="ECO:0000255" key="1">
    <source>
        <dbReference type="PROSITE-ProRule" id="PRU00457"/>
    </source>
</evidence>
<evidence type="ECO:0000255" key="2">
    <source>
        <dbReference type="PROSITE-ProRule" id="PRU00615"/>
    </source>
</evidence>
<evidence type="ECO:0000305" key="3"/>
<proteinExistence type="inferred from homology"/>
<comment type="function">
    <text evidence="3">Required for the transposition of the insertion element.</text>
</comment>
<comment type="similarity">
    <text evidence="3">Belongs to the transposase IS21/IS408/IS1162 family.</text>
</comment>
<feature type="chain" id="PRO_0000075467" description="Transposase">
    <location>
        <begin position="1"/>
        <end position="508"/>
    </location>
</feature>
<feature type="domain" description="HTH IS21-type" evidence="2">
    <location>
        <begin position="3"/>
        <end position="65"/>
    </location>
</feature>
<feature type="domain" description="Integrase catalytic" evidence="1">
    <location>
        <begin position="124"/>
        <end position="299"/>
    </location>
</feature>
<organism>
    <name type="scientific">Aminobacter aminovorans</name>
    <name type="common">Chelatobacter heintzii</name>
    <dbReference type="NCBI Taxonomy" id="83263"/>
    <lineage>
        <taxon>Bacteria</taxon>
        <taxon>Pseudomonadati</taxon>
        <taxon>Pseudomonadota</taxon>
        <taxon>Alphaproteobacteria</taxon>
        <taxon>Hyphomicrobiales</taxon>
        <taxon>Phyllobacteriaceae</taxon>
        <taxon>Aminobacter</taxon>
    </lineage>
</organism>
<keyword id="KW-0233">DNA recombination</keyword>
<keyword id="KW-0238">DNA-binding</keyword>
<keyword id="KW-0814">Transposable element</keyword>
<keyword id="KW-0815">Transposition</keyword>